<protein>
    <recommendedName>
        <fullName evidence="9">Retron Ec86 reverse transcriptase</fullName>
        <shortName>Ec86-RT</shortName>
        <ecNumber evidence="4">2.7.7.49</ecNumber>
    </recommendedName>
    <alternativeName>
        <fullName evidence="8">ORF320</fullName>
    </alternativeName>
    <alternativeName>
        <fullName evidence="8">Reverse transcriptase</fullName>
        <shortName evidence="9">RT</shortName>
    </alternativeName>
</protein>
<sequence>MKSAEYLNTFRLRNLGLPVMNNLHDMSKATRISVETLRLLIYTADFRYRIYTVEKKGPEKRMRTIYQPSRELKALQGWVLRNILDKLSSSPFSIGFEKHQSILNNATPHIGANFILNIDLEDFFPSLTANKVFGVFHSLGYNRLISSVLTKICCYKNLLPQGAPSSPKLANLICSKLDYRIQGYAGSRGLIYTRYADDLTLSAQSMKKVVKARDFLFSIIPSEGLVINSKKTCISGPRSQRKVTGLVISQEKVGIGREKYKEIRAKIHHIFCGKSSEIEHVRGWLSFILSVDSKSHRRLITYISKLEKKYGKNPLNKAKT</sequence>
<reference evidence="13" key="1">
    <citation type="journal article" date="1989" name="Cell">
        <title>Reverse transcriptase-dependent synthesis of a covalently linked, branched DNA-RNA compound in E. coli B.</title>
        <authorList>
            <person name="Lim D."/>
            <person name="Maas W.K."/>
        </authorList>
    </citation>
    <scope>NUCLEOTIDE SEQUENCE [GENOMIC DNA]</scope>
    <scope>FUNCTION</scope>
    <scope>CATALYTIC ACTIVITY</scope>
    <source>
        <strain>B / AC2514</strain>
    </source>
</reference>
<reference evidence="14" key="2">
    <citation type="journal article" date="1991" name="Mol. Microbiol.">
        <title>Structure of two retrons of Escherichia coli and their common chromosomal insertion site.</title>
        <authorList>
            <person name="Lim D."/>
        </authorList>
    </citation>
    <scope>NUCLEOTIDE SEQUENCE [GENOMIC DNA]</scope>
    <source>
        <strain>B / AC2514</strain>
    </source>
</reference>
<reference key="3">
    <citation type="journal article" date="1994" name="Mol. Microbiol.">
        <title>Multicopy single-stranded DNAs with mismatched base pairs are mutagenic in Escherichia coli.</title>
        <authorList>
            <person name="Maas W.K."/>
            <person name="Wang C."/>
            <person name="Lima T."/>
            <person name="Zubay G."/>
            <person name="Lim D."/>
        </authorList>
    </citation>
    <scope>FUNCTION</scope>
    <scope>DISRUPTION PHENOTYPE</scope>
    <source>
        <strain>B / AC2514</strain>
    </source>
</reference>
<reference key="4">
    <citation type="journal article" date="1999" name="J. Biol. Chem.">
        <title>Highly specific recognition of primer RNA structures for 2'-OH priming reaction by bacterial reverse transcriptases.</title>
        <authorList>
            <person name="Inouye S."/>
            <person name="Hsu M.Y."/>
            <person name="Xu A."/>
            <person name="Inouye M."/>
        </authorList>
    </citation>
    <scope>FUNCTION</scope>
    <scope>DOMAIN</scope>
    <scope>RNA-BINDING</scope>
</reference>
<reference key="5">
    <citation type="journal article" date="2020" name="Cell">
        <title>Bacterial Retrons Function In Anti-Phage Defense.</title>
        <authorList>
            <person name="Millman A."/>
            <person name="Bernheim A."/>
            <person name="Stokar-Avihail A."/>
            <person name="Fedorenko T."/>
            <person name="Voichek M."/>
            <person name="Leavitt A."/>
            <person name="Oppenheimer-Shaanan Y."/>
            <person name="Sorek R."/>
        </authorList>
    </citation>
    <scope>FUNCTION IN ANTIVIRAL DEFENSE</scope>
    <scope>IDENTIFICATION AS A RETRON</scope>
    <source>
        <strain>BL21 (DE3)</strain>
    </source>
</reference>
<evidence type="ECO:0000255" key="1">
    <source>
        <dbReference type="PROSITE-ProRule" id="PRU00405"/>
    </source>
</evidence>
<evidence type="ECO:0000269" key="2">
    <source>
    </source>
</evidence>
<evidence type="ECO:0000269" key="3">
    <source>
    </source>
</evidence>
<evidence type="ECO:0000269" key="4">
    <source>
    </source>
</evidence>
<evidence type="ECO:0000269" key="5">
    <source>
    </source>
</evidence>
<evidence type="ECO:0000269" key="6">
    <source>
    </source>
</evidence>
<evidence type="ECO:0000303" key="7">
    <source>
    </source>
</evidence>
<evidence type="ECO:0000303" key="8">
    <source>
    </source>
</evidence>
<evidence type="ECO:0000303" key="9">
    <source>
    </source>
</evidence>
<evidence type="ECO:0000305" key="10"/>
<evidence type="ECO:0000305" key="11">
    <source>
    </source>
</evidence>
<evidence type="ECO:0000305" key="12">
    <source>
    </source>
</evidence>
<evidence type="ECO:0000312" key="13">
    <source>
        <dbReference type="EMBL" id="AAA61471.1"/>
    </source>
</evidence>
<evidence type="ECO:0000312" key="14">
    <source>
        <dbReference type="EMBL" id="CAB56781.1"/>
    </source>
</evidence>
<evidence type="ECO:0007829" key="15">
    <source>
        <dbReference type="PDB" id="7V9U"/>
    </source>
</evidence>
<evidence type="ECO:0007829" key="16">
    <source>
        <dbReference type="PDB" id="7XJG"/>
    </source>
</evidence>
<accession>P23070</accession>
<proteinExistence type="evidence at protein level"/>
<feature type="chain" id="PRO_0000097509" description="Retron Ec86 reverse transcriptase">
    <location>
        <begin position="1"/>
        <end position="320"/>
    </location>
</feature>
<feature type="domain" description="Reverse transcriptase" evidence="1">
    <location>
        <begin position="34"/>
        <end position="248"/>
    </location>
</feature>
<feature type="region of interest" description="Necessary and required for recognition and binding of RNA" evidence="2">
    <location>
        <begin position="230"/>
        <end position="320"/>
    </location>
</feature>
<feature type="binding site" evidence="1">
    <location>
        <position position="119"/>
    </location>
    <ligand>
        <name>Mg(2+)</name>
        <dbReference type="ChEBI" id="CHEBI:18420"/>
        <note>catalytic</note>
    </ligand>
</feature>
<feature type="binding site" evidence="1">
    <location>
        <position position="197"/>
    </location>
    <ligand>
        <name>Mg(2+)</name>
        <dbReference type="ChEBI" id="CHEBI:18420"/>
        <note>catalytic</note>
    </ligand>
</feature>
<feature type="binding site" evidence="1">
    <location>
        <position position="198"/>
    </location>
    <ligand>
        <name>Mg(2+)</name>
        <dbReference type="ChEBI" id="CHEBI:18420"/>
        <note>catalytic</note>
    </ligand>
</feature>
<feature type="helix" evidence="16">
    <location>
        <begin position="4"/>
        <end position="15"/>
    </location>
</feature>
<feature type="helix" evidence="16">
    <location>
        <begin position="23"/>
        <end position="30"/>
    </location>
</feature>
<feature type="helix" evidence="16">
    <location>
        <begin position="34"/>
        <end position="42"/>
    </location>
</feature>
<feature type="helix" evidence="16">
    <location>
        <begin position="44"/>
        <end position="46"/>
    </location>
</feature>
<feature type="strand" evidence="16">
    <location>
        <begin position="47"/>
        <end position="53"/>
    </location>
</feature>
<feature type="strand" evidence="16">
    <location>
        <begin position="56"/>
        <end position="59"/>
    </location>
</feature>
<feature type="strand" evidence="16">
    <location>
        <begin position="63"/>
        <end position="68"/>
    </location>
</feature>
<feature type="helix" evidence="16">
    <location>
        <begin position="70"/>
        <end position="82"/>
    </location>
</feature>
<feature type="helix" evidence="16">
    <location>
        <begin position="84"/>
        <end position="86"/>
    </location>
</feature>
<feature type="strand" evidence="16">
    <location>
        <begin position="95"/>
        <end position="97"/>
    </location>
</feature>
<feature type="helix" evidence="16">
    <location>
        <begin position="103"/>
        <end position="106"/>
    </location>
</feature>
<feature type="helix" evidence="16">
    <location>
        <begin position="107"/>
        <end position="109"/>
    </location>
</feature>
<feature type="strand" evidence="16">
    <location>
        <begin position="113"/>
        <end position="120"/>
    </location>
</feature>
<feature type="helix" evidence="16">
    <location>
        <begin position="123"/>
        <end position="126"/>
    </location>
</feature>
<feature type="helix" evidence="16">
    <location>
        <begin position="129"/>
        <end position="139"/>
    </location>
</feature>
<feature type="helix" evidence="16">
    <location>
        <begin position="143"/>
        <end position="153"/>
    </location>
</feature>
<feature type="strand" evidence="16">
    <location>
        <begin position="155"/>
        <end position="158"/>
    </location>
</feature>
<feature type="helix" evidence="16">
    <location>
        <begin position="166"/>
        <end position="173"/>
    </location>
</feature>
<feature type="helix" evidence="16">
    <location>
        <begin position="175"/>
        <end position="185"/>
    </location>
</feature>
<feature type="turn" evidence="16">
    <location>
        <begin position="186"/>
        <end position="189"/>
    </location>
</feature>
<feature type="strand" evidence="16">
    <location>
        <begin position="191"/>
        <end position="195"/>
    </location>
</feature>
<feature type="strand" evidence="16">
    <location>
        <begin position="198"/>
        <end position="204"/>
    </location>
</feature>
<feature type="helix" evidence="16">
    <location>
        <begin position="206"/>
        <end position="219"/>
    </location>
</feature>
<feature type="helix" evidence="16">
    <location>
        <begin position="220"/>
        <end position="223"/>
    </location>
</feature>
<feature type="strand" evidence="16">
    <location>
        <begin position="229"/>
        <end position="231"/>
    </location>
</feature>
<feature type="strand" evidence="16">
    <location>
        <begin position="233"/>
        <end position="235"/>
    </location>
</feature>
<feature type="strand" evidence="16">
    <location>
        <begin position="237"/>
        <end position="239"/>
    </location>
</feature>
<feature type="strand" evidence="16">
    <location>
        <begin position="246"/>
        <end position="248"/>
    </location>
</feature>
<feature type="strand" evidence="16">
    <location>
        <begin position="253"/>
        <end position="255"/>
    </location>
</feature>
<feature type="helix" evidence="16">
    <location>
        <begin position="257"/>
        <end position="271"/>
    </location>
</feature>
<feature type="strand" evidence="15">
    <location>
        <begin position="272"/>
        <end position="274"/>
    </location>
</feature>
<feature type="helix" evidence="16">
    <location>
        <begin position="278"/>
        <end position="291"/>
    </location>
</feature>
<feature type="helix" evidence="16">
    <location>
        <begin position="293"/>
        <end position="310"/>
    </location>
</feature>
<organism>
    <name type="scientific">Escherichia coli</name>
    <dbReference type="NCBI Taxonomy" id="562"/>
    <lineage>
        <taxon>Bacteria</taxon>
        <taxon>Pseudomonadati</taxon>
        <taxon>Pseudomonadota</taxon>
        <taxon>Gammaproteobacteria</taxon>
        <taxon>Enterobacterales</taxon>
        <taxon>Enterobacteriaceae</taxon>
        <taxon>Escherichia</taxon>
    </lineage>
</organism>
<dbReference type="EC" id="2.7.7.49" evidence="4"/>
<dbReference type="EMBL" id="M24408">
    <property type="protein sequence ID" value="AAA61471.1"/>
    <property type="molecule type" value="Genomic_DNA"/>
</dbReference>
<dbReference type="EMBL" id="X60206">
    <property type="protein sequence ID" value="CAB56781.1"/>
    <property type="molecule type" value="Genomic_DNA"/>
</dbReference>
<dbReference type="PIR" id="A31498">
    <property type="entry name" value="RREC"/>
</dbReference>
<dbReference type="RefSeq" id="WP_001320043.1">
    <property type="nucleotide sequence ID" value="NZ_RRMI01000027.1"/>
</dbReference>
<dbReference type="PDB" id="7V9U">
    <property type="method" value="EM"/>
    <property type="resolution" value="3.12 A"/>
    <property type="chains" value="A/B=1-320"/>
</dbReference>
<dbReference type="PDB" id="7V9X">
    <property type="method" value="EM"/>
    <property type="resolution" value="2.82 A"/>
    <property type="chains" value="A/B=1-320"/>
</dbReference>
<dbReference type="PDB" id="7XJG">
    <property type="method" value="EM"/>
    <property type="resolution" value="2.51 A"/>
    <property type="chains" value="A/B=1-320"/>
</dbReference>
<dbReference type="PDB" id="8QBK">
    <property type="method" value="EM"/>
    <property type="resolution" value="2.99 A"/>
    <property type="chains" value="A/K/P/U=1-320"/>
</dbReference>
<dbReference type="PDB" id="8QBL">
    <property type="method" value="EM"/>
    <property type="resolution" value="2.66 A"/>
    <property type="chains" value="A/I/K/P/U/Z=1-320"/>
</dbReference>
<dbReference type="PDB" id="8QBM">
    <property type="method" value="EM"/>
    <property type="resolution" value="3.09 A"/>
    <property type="chains" value="A/I/K/P/U/Z=1-320"/>
</dbReference>
<dbReference type="PDB" id="9JM0">
    <property type="method" value="EM"/>
    <property type="resolution" value="2.70 A"/>
    <property type="chains" value="A/B/K/P=1-320"/>
</dbReference>
<dbReference type="PDBsum" id="7V9U"/>
<dbReference type="PDBsum" id="7V9X"/>
<dbReference type="PDBsum" id="7XJG"/>
<dbReference type="PDBsum" id="8QBK"/>
<dbReference type="PDBsum" id="8QBL"/>
<dbReference type="PDBsum" id="8QBM"/>
<dbReference type="PDBsum" id="9JM0"/>
<dbReference type="EMDB" id="EMD-18313"/>
<dbReference type="EMDB" id="EMD-18314"/>
<dbReference type="EMDB" id="EMD-18315"/>
<dbReference type="EMDB" id="EMD-18317"/>
<dbReference type="EMDB" id="EMD-19792"/>
<dbReference type="EMDB" id="EMD-19793"/>
<dbReference type="EMDB" id="EMD-31827"/>
<dbReference type="EMDB" id="EMD-31829"/>
<dbReference type="EMDB" id="EMD-33226"/>
<dbReference type="EMDB" id="EMD-61595"/>
<dbReference type="SMR" id="P23070"/>
<dbReference type="PATRIC" id="fig|562.7299.peg.902"/>
<dbReference type="OMA" id="TIYHRIL"/>
<dbReference type="GO" id="GO:0046872">
    <property type="term" value="F:metal ion binding"/>
    <property type="evidence" value="ECO:0007669"/>
    <property type="project" value="UniProtKB-KW"/>
</dbReference>
<dbReference type="GO" id="GO:0003723">
    <property type="term" value="F:RNA binding"/>
    <property type="evidence" value="ECO:0007669"/>
    <property type="project" value="UniProtKB-KW"/>
</dbReference>
<dbReference type="GO" id="GO:0003964">
    <property type="term" value="F:RNA-directed DNA polymerase activity"/>
    <property type="evidence" value="ECO:0007669"/>
    <property type="project" value="UniProtKB-KW"/>
</dbReference>
<dbReference type="GO" id="GO:0051607">
    <property type="term" value="P:defense response to virus"/>
    <property type="evidence" value="ECO:0007669"/>
    <property type="project" value="UniProtKB-KW"/>
</dbReference>
<dbReference type="CDD" id="cd03487">
    <property type="entry name" value="RT_Bac_retron_II"/>
    <property type="match status" value="1"/>
</dbReference>
<dbReference type="InterPro" id="IPR043502">
    <property type="entry name" value="DNA/RNA_pol_sf"/>
</dbReference>
<dbReference type="InterPro" id="IPR051083">
    <property type="entry name" value="GrpII_Intron_Splice-Mob/Def"/>
</dbReference>
<dbReference type="InterPro" id="IPR000123">
    <property type="entry name" value="Reverse_transcriptase_msDNA"/>
</dbReference>
<dbReference type="InterPro" id="IPR000477">
    <property type="entry name" value="RT_dom"/>
</dbReference>
<dbReference type="NCBIfam" id="NF038233">
    <property type="entry name" value="retron_St85_RT"/>
    <property type="match status" value="1"/>
</dbReference>
<dbReference type="PANTHER" id="PTHR34047">
    <property type="entry name" value="NUCLEAR INTRON MATURASE 1, MITOCHONDRIAL-RELATED"/>
    <property type="match status" value="1"/>
</dbReference>
<dbReference type="PANTHER" id="PTHR34047:SF7">
    <property type="entry name" value="RNA-DIRECTED DNA POLYMERASE"/>
    <property type="match status" value="1"/>
</dbReference>
<dbReference type="Pfam" id="PF00078">
    <property type="entry name" value="RVT_1"/>
    <property type="match status" value="1"/>
</dbReference>
<dbReference type="PRINTS" id="PR00866">
    <property type="entry name" value="RNADNAPOLMS"/>
</dbReference>
<dbReference type="SUPFAM" id="SSF56672">
    <property type="entry name" value="DNA/RNA polymerases"/>
    <property type="match status" value="1"/>
</dbReference>
<dbReference type="PROSITE" id="PS50878">
    <property type="entry name" value="RT_POL"/>
    <property type="match status" value="1"/>
</dbReference>
<name>RT86_ECOLX</name>
<keyword id="KW-0002">3D-structure</keyword>
<keyword id="KW-0051">Antiviral defense</keyword>
<keyword id="KW-0460">Magnesium</keyword>
<keyword id="KW-0479">Metal-binding</keyword>
<keyword id="KW-0548">Nucleotidyltransferase</keyword>
<keyword id="KW-0694">RNA-binding</keyword>
<keyword id="KW-0695">RNA-directed DNA polymerase</keyword>
<keyword id="KW-0808">Transferase</keyword>
<keyword id="KW-0814">Transposable element</keyword>
<gene>
    <name evidence="7" type="primary">ret</name>
    <name type="ORF">LM2_00877</name>
</gene>
<comment type="function">
    <text evidence="2 4 5 6 12">Reverse transcriptase (RT) component of antiviral defense system retron Ec86, composed of a non-coding RNA (ncRNA), a ribosyltransferase/DNA-binding protein and this RT. Expression of the 3-gene retron confers protection against bacteriophage T5. At multiplicity of infection (MOI) of 0.02 cultures grow normally when infected with T5 without collapsing, at MOI 2 cultures enter growth stasis (PubMed:33157039). Responsible for synthesis of msDNA (a branched molecule with RNA linked by a 2',5'-phosphodiester bond to ssDNA). The retron transcript serves as primer (from a conserved internal G residue) and template for the reaction, and codes for the RT (PubMed:10531319, PubMed:2466573). Recognizes only its cognate RNA as a primer template (PubMed:10531319). Overexpression of the ncRNA and RT (without the ribosyltransferase), which leads to increased levels of msDNA, is mutagenic in vivo (PubMed:7885227). This may be due to a mismatch in the msDNA stem which binds and sequesters MutS and/or MutL (Probable).</text>
</comment>
<comment type="catalytic activity">
    <reaction evidence="1 4">
        <text>DNA(n) + a 2'-deoxyribonucleoside 5'-triphosphate = DNA(n+1) + diphosphate</text>
        <dbReference type="Rhea" id="RHEA:22508"/>
        <dbReference type="Rhea" id="RHEA-COMP:17339"/>
        <dbReference type="Rhea" id="RHEA-COMP:17340"/>
        <dbReference type="ChEBI" id="CHEBI:33019"/>
        <dbReference type="ChEBI" id="CHEBI:61560"/>
        <dbReference type="ChEBI" id="CHEBI:173112"/>
        <dbReference type="EC" id="2.7.7.49"/>
    </reaction>
</comment>
<comment type="domain">
    <text evidence="2">The C-terminal domain (residues 230-320) is required to recognize and bind RNA; recognition of cognate RNA also requires a region closer to the N-terminus.</text>
</comment>
<comment type="disruption phenotype">
    <text evidence="6">Loss of expression of msDNA, no longer mutagenic (when overexpressed).</text>
</comment>
<comment type="miscellaneous">
    <text>Retrons may be the ancestors of retrovirus.</text>
</comment>
<comment type="similarity">
    <text evidence="10">Belongs to the bacterial reverse transcriptase family.</text>
</comment>
<comment type="caution">
    <text evidence="3 4 11">DNA from strain B / AC2514 has genes in the order ribosyltransferase-ncRNA-RT (PubMed:1722556, PubMed:2466573). The data presented in Millman et al., says genes are encoded in the order ncRNA-ribosyltransferase-RT.</text>
</comment>